<protein>
    <recommendedName>
        <fullName evidence="1">Elongation factor P</fullName>
        <shortName evidence="1">EF-P</shortName>
    </recommendedName>
</protein>
<proteinExistence type="inferred from homology"/>
<sequence length="185" mass="20692">MISVNDFRTGLTIAVDNGLWQVLDFQHVKPGKGAAFVRSKLRNLRTGSVQEKTFRAGEKVEKAHIENRRMQYLYASGEAHVFMDNGTYEQIELGEKQIERELKFLKENMEVSIMTYQGEVLGVELPNTVELQVTETEPGIKGDTASNVTKPATLETGLVVQVPIFINEGEMLIINTGEGKYVSRA</sequence>
<feature type="chain" id="PRO_0000094194" description="Elongation factor P">
    <location>
        <begin position="1"/>
        <end position="185"/>
    </location>
</feature>
<name>EFP_BACCZ</name>
<keyword id="KW-0963">Cytoplasm</keyword>
<keyword id="KW-0251">Elongation factor</keyword>
<keyword id="KW-0648">Protein biosynthesis</keyword>
<reference key="1">
    <citation type="journal article" date="2006" name="J. Bacteriol.">
        <title>Pathogenomic sequence analysis of Bacillus cereus and Bacillus thuringiensis isolates closely related to Bacillus anthracis.</title>
        <authorList>
            <person name="Han C.S."/>
            <person name="Xie G."/>
            <person name="Challacombe J.F."/>
            <person name="Altherr M.R."/>
            <person name="Bhotika S.S."/>
            <person name="Bruce D."/>
            <person name="Campbell C.S."/>
            <person name="Campbell M.L."/>
            <person name="Chen J."/>
            <person name="Chertkov O."/>
            <person name="Cleland C."/>
            <person name="Dimitrijevic M."/>
            <person name="Doggett N.A."/>
            <person name="Fawcett J.J."/>
            <person name="Glavina T."/>
            <person name="Goodwin L.A."/>
            <person name="Hill K.K."/>
            <person name="Hitchcock P."/>
            <person name="Jackson P.J."/>
            <person name="Keim P."/>
            <person name="Kewalramani A.R."/>
            <person name="Longmire J."/>
            <person name="Lucas S."/>
            <person name="Malfatti S."/>
            <person name="McMurry K."/>
            <person name="Meincke L.J."/>
            <person name="Misra M."/>
            <person name="Moseman B.L."/>
            <person name="Mundt M."/>
            <person name="Munk A.C."/>
            <person name="Okinaka R.T."/>
            <person name="Parson-Quintana B."/>
            <person name="Reilly L.P."/>
            <person name="Richardson P."/>
            <person name="Robinson D.L."/>
            <person name="Rubin E."/>
            <person name="Saunders E."/>
            <person name="Tapia R."/>
            <person name="Tesmer J.G."/>
            <person name="Thayer N."/>
            <person name="Thompson L.S."/>
            <person name="Tice H."/>
            <person name="Ticknor L.O."/>
            <person name="Wills P.L."/>
            <person name="Brettin T.S."/>
            <person name="Gilna P."/>
        </authorList>
    </citation>
    <scope>NUCLEOTIDE SEQUENCE [LARGE SCALE GENOMIC DNA]</scope>
    <source>
        <strain>ZK / E33L</strain>
    </source>
</reference>
<accession>Q634Y7</accession>
<evidence type="ECO:0000255" key="1">
    <source>
        <dbReference type="HAMAP-Rule" id="MF_00141"/>
    </source>
</evidence>
<comment type="function">
    <text evidence="1">Involved in peptide bond synthesis. Stimulates efficient translation and peptide-bond synthesis on native or reconstituted 70S ribosomes in vitro. Probably functions indirectly by altering the affinity of the ribosome for aminoacyl-tRNA, thus increasing their reactivity as acceptors for peptidyl transferase.</text>
</comment>
<comment type="pathway">
    <text evidence="1">Protein biosynthesis; polypeptide chain elongation.</text>
</comment>
<comment type="subcellular location">
    <subcellularLocation>
        <location evidence="1">Cytoplasm</location>
    </subcellularLocation>
</comment>
<comment type="similarity">
    <text evidence="1">Belongs to the elongation factor P family.</text>
</comment>
<dbReference type="EMBL" id="CP000001">
    <property type="protein sequence ID" value="AAU16317.1"/>
    <property type="molecule type" value="Genomic_DNA"/>
</dbReference>
<dbReference type="RefSeq" id="WP_000626507.1">
    <property type="nucleotide sequence ID" value="NZ_CP009968.1"/>
</dbReference>
<dbReference type="SMR" id="Q634Y7"/>
<dbReference type="GeneID" id="45024081"/>
<dbReference type="KEGG" id="bcz:BCE33L3950"/>
<dbReference type="PATRIC" id="fig|288681.22.peg.1446"/>
<dbReference type="UniPathway" id="UPA00345"/>
<dbReference type="Proteomes" id="UP000002612">
    <property type="component" value="Chromosome"/>
</dbReference>
<dbReference type="GO" id="GO:0005737">
    <property type="term" value="C:cytoplasm"/>
    <property type="evidence" value="ECO:0007669"/>
    <property type="project" value="UniProtKB-SubCell"/>
</dbReference>
<dbReference type="GO" id="GO:0003746">
    <property type="term" value="F:translation elongation factor activity"/>
    <property type="evidence" value="ECO:0007669"/>
    <property type="project" value="UniProtKB-UniRule"/>
</dbReference>
<dbReference type="GO" id="GO:0043043">
    <property type="term" value="P:peptide biosynthetic process"/>
    <property type="evidence" value="ECO:0007669"/>
    <property type="project" value="InterPro"/>
</dbReference>
<dbReference type="CDD" id="cd04470">
    <property type="entry name" value="S1_EF-P_repeat_1"/>
    <property type="match status" value="1"/>
</dbReference>
<dbReference type="CDD" id="cd05794">
    <property type="entry name" value="S1_EF-P_repeat_2"/>
    <property type="match status" value="1"/>
</dbReference>
<dbReference type="FunFam" id="2.30.30.30:FF:000010">
    <property type="entry name" value="Elongation factor P"/>
    <property type="match status" value="1"/>
</dbReference>
<dbReference type="FunFam" id="2.40.50.140:FF:000004">
    <property type="entry name" value="Elongation factor P"/>
    <property type="match status" value="1"/>
</dbReference>
<dbReference type="FunFam" id="2.40.50.140:FF:000009">
    <property type="entry name" value="Elongation factor P"/>
    <property type="match status" value="1"/>
</dbReference>
<dbReference type="Gene3D" id="2.30.30.30">
    <property type="match status" value="1"/>
</dbReference>
<dbReference type="Gene3D" id="2.40.50.140">
    <property type="entry name" value="Nucleic acid-binding proteins"/>
    <property type="match status" value="2"/>
</dbReference>
<dbReference type="HAMAP" id="MF_00141">
    <property type="entry name" value="EF_P"/>
    <property type="match status" value="1"/>
</dbReference>
<dbReference type="InterPro" id="IPR015365">
    <property type="entry name" value="Elong-fact-P_C"/>
</dbReference>
<dbReference type="InterPro" id="IPR012340">
    <property type="entry name" value="NA-bd_OB-fold"/>
</dbReference>
<dbReference type="InterPro" id="IPR014722">
    <property type="entry name" value="Rib_uL2_dom2"/>
</dbReference>
<dbReference type="InterPro" id="IPR020599">
    <property type="entry name" value="Transl_elong_fac_P/YeiP"/>
</dbReference>
<dbReference type="InterPro" id="IPR013185">
    <property type="entry name" value="Transl_elong_KOW-like"/>
</dbReference>
<dbReference type="InterPro" id="IPR001059">
    <property type="entry name" value="Transl_elong_P/YeiP_cen"/>
</dbReference>
<dbReference type="InterPro" id="IPR013852">
    <property type="entry name" value="Transl_elong_P/YeiP_CS"/>
</dbReference>
<dbReference type="InterPro" id="IPR011768">
    <property type="entry name" value="Transl_elongation_fac_P"/>
</dbReference>
<dbReference type="InterPro" id="IPR008991">
    <property type="entry name" value="Translation_prot_SH3-like_sf"/>
</dbReference>
<dbReference type="NCBIfam" id="TIGR00038">
    <property type="entry name" value="efp"/>
    <property type="match status" value="1"/>
</dbReference>
<dbReference type="NCBIfam" id="NF001810">
    <property type="entry name" value="PRK00529.1"/>
    <property type="match status" value="1"/>
</dbReference>
<dbReference type="PANTHER" id="PTHR30053">
    <property type="entry name" value="ELONGATION FACTOR P"/>
    <property type="match status" value="1"/>
</dbReference>
<dbReference type="PANTHER" id="PTHR30053:SF12">
    <property type="entry name" value="ELONGATION FACTOR P (EF-P) FAMILY PROTEIN"/>
    <property type="match status" value="1"/>
</dbReference>
<dbReference type="Pfam" id="PF01132">
    <property type="entry name" value="EFP"/>
    <property type="match status" value="1"/>
</dbReference>
<dbReference type="Pfam" id="PF08207">
    <property type="entry name" value="EFP_N"/>
    <property type="match status" value="1"/>
</dbReference>
<dbReference type="Pfam" id="PF09285">
    <property type="entry name" value="Elong-fact-P_C"/>
    <property type="match status" value="1"/>
</dbReference>
<dbReference type="PIRSF" id="PIRSF005901">
    <property type="entry name" value="EF-P"/>
    <property type="match status" value="1"/>
</dbReference>
<dbReference type="SMART" id="SM01185">
    <property type="entry name" value="EFP"/>
    <property type="match status" value="1"/>
</dbReference>
<dbReference type="SMART" id="SM00841">
    <property type="entry name" value="Elong-fact-P_C"/>
    <property type="match status" value="1"/>
</dbReference>
<dbReference type="SUPFAM" id="SSF50249">
    <property type="entry name" value="Nucleic acid-binding proteins"/>
    <property type="match status" value="2"/>
</dbReference>
<dbReference type="SUPFAM" id="SSF50104">
    <property type="entry name" value="Translation proteins SH3-like domain"/>
    <property type="match status" value="1"/>
</dbReference>
<dbReference type="PROSITE" id="PS01275">
    <property type="entry name" value="EFP"/>
    <property type="match status" value="1"/>
</dbReference>
<gene>
    <name evidence="1" type="primary">efp</name>
    <name type="ordered locus">BCE33L3950</name>
</gene>
<organism>
    <name type="scientific">Bacillus cereus (strain ZK / E33L)</name>
    <dbReference type="NCBI Taxonomy" id="288681"/>
    <lineage>
        <taxon>Bacteria</taxon>
        <taxon>Bacillati</taxon>
        <taxon>Bacillota</taxon>
        <taxon>Bacilli</taxon>
        <taxon>Bacillales</taxon>
        <taxon>Bacillaceae</taxon>
        <taxon>Bacillus</taxon>
        <taxon>Bacillus cereus group</taxon>
    </lineage>
</organism>